<keyword id="KW-0479">Metal-binding</keyword>
<keyword id="KW-1185">Reference proteome</keyword>
<keyword id="KW-0687">Ribonucleoprotein</keyword>
<keyword id="KW-0689">Ribosomal protein</keyword>
<keyword id="KW-0694">RNA-binding</keyword>
<keyword id="KW-0699">rRNA-binding</keyword>
<keyword id="KW-0862">Zinc</keyword>
<organism>
    <name type="scientific">Coprothermobacter proteolyticus (strain ATCC 35245 / DSM 5265 / OCM 4 / BT)</name>
    <dbReference type="NCBI Taxonomy" id="309798"/>
    <lineage>
        <taxon>Bacteria</taxon>
        <taxon>Pseudomonadati</taxon>
        <taxon>Coprothermobacterota</taxon>
        <taxon>Coprothermobacteria</taxon>
        <taxon>Coprothermobacterales</taxon>
        <taxon>Coprothermobacteraceae</taxon>
        <taxon>Coprothermobacter</taxon>
    </lineage>
</organism>
<protein>
    <recommendedName>
        <fullName evidence="1">Small ribosomal subunit protein uS14</fullName>
    </recommendedName>
    <alternativeName>
        <fullName evidence="2">30S ribosomal protein S14 type Z</fullName>
    </alternativeName>
</protein>
<reference key="1">
    <citation type="submission" date="2008-08" db="EMBL/GenBank/DDBJ databases">
        <title>The complete genome sequence of Coprothermobacter proteolyticus strain ATCC 5245 / DSM 5265 / BT.</title>
        <authorList>
            <person name="Dodson R.J."/>
            <person name="Durkin A.S."/>
            <person name="Wu M."/>
            <person name="Eisen J."/>
            <person name="Sutton G."/>
        </authorList>
    </citation>
    <scope>NUCLEOTIDE SEQUENCE [LARGE SCALE GENOMIC DNA]</scope>
    <source>
        <strain>ATCC 35245 / DSM 5265 / OCM 4 / BT</strain>
    </source>
</reference>
<comment type="function">
    <text evidence="1">Binds 16S rRNA, required for the assembly of 30S particles and may also be responsible for determining the conformation of the 16S rRNA at the A site.</text>
</comment>
<comment type="cofactor">
    <cofactor evidence="1">
        <name>Zn(2+)</name>
        <dbReference type="ChEBI" id="CHEBI:29105"/>
    </cofactor>
    <text evidence="1">Binds 1 zinc ion per subunit.</text>
</comment>
<comment type="subunit">
    <text evidence="1">Part of the 30S ribosomal subunit. Contacts proteins S3 and S10.</text>
</comment>
<comment type="similarity">
    <text evidence="1">Belongs to the universal ribosomal protein uS14 family. Zinc-binding uS14 subfamily.</text>
</comment>
<feature type="chain" id="PRO_1000143894" description="Small ribosomal subunit protein uS14">
    <location>
        <begin position="1"/>
        <end position="61"/>
    </location>
</feature>
<feature type="binding site" evidence="1">
    <location>
        <position position="24"/>
    </location>
    <ligand>
        <name>Zn(2+)</name>
        <dbReference type="ChEBI" id="CHEBI:29105"/>
    </ligand>
</feature>
<feature type="binding site" evidence="1">
    <location>
        <position position="27"/>
    </location>
    <ligand>
        <name>Zn(2+)</name>
        <dbReference type="ChEBI" id="CHEBI:29105"/>
    </ligand>
</feature>
<feature type="binding site" evidence="1">
    <location>
        <position position="40"/>
    </location>
    <ligand>
        <name>Zn(2+)</name>
        <dbReference type="ChEBI" id="CHEBI:29105"/>
    </ligand>
</feature>
<feature type="binding site" evidence="1">
    <location>
        <position position="43"/>
    </location>
    <ligand>
        <name>Zn(2+)</name>
        <dbReference type="ChEBI" id="CHEBI:29105"/>
    </ligand>
</feature>
<name>RS14Z_COPPD</name>
<accession>B5Y975</accession>
<evidence type="ECO:0000255" key="1">
    <source>
        <dbReference type="HAMAP-Rule" id="MF_01364"/>
    </source>
</evidence>
<evidence type="ECO:0000305" key="2"/>
<sequence>MARKALKIKAEKEPKFSTRKYTRCKICGRSRAVYRDFGICRLCLRELAHKGSIPGLKKASW</sequence>
<proteinExistence type="inferred from homology"/>
<gene>
    <name evidence="1" type="primary">rpsZ</name>
    <name evidence="1" type="synonym">rpsN</name>
    <name type="ordered locus">COPRO5265_1000</name>
</gene>
<dbReference type="EMBL" id="CP001145">
    <property type="protein sequence ID" value="ACI17577.1"/>
    <property type="molecule type" value="Genomic_DNA"/>
</dbReference>
<dbReference type="RefSeq" id="WP_012544229.1">
    <property type="nucleotide sequence ID" value="NC_011295.1"/>
</dbReference>
<dbReference type="SMR" id="B5Y975"/>
<dbReference type="STRING" id="309798.COPRO5265_1000"/>
<dbReference type="KEGG" id="cpo:COPRO5265_1000"/>
<dbReference type="eggNOG" id="COG0199">
    <property type="taxonomic scope" value="Bacteria"/>
</dbReference>
<dbReference type="HOGENOM" id="CLU_139869_3_0_9"/>
<dbReference type="OrthoDB" id="9810484at2"/>
<dbReference type="Proteomes" id="UP000001732">
    <property type="component" value="Chromosome"/>
</dbReference>
<dbReference type="GO" id="GO:0005737">
    <property type="term" value="C:cytoplasm"/>
    <property type="evidence" value="ECO:0007669"/>
    <property type="project" value="UniProtKB-ARBA"/>
</dbReference>
<dbReference type="GO" id="GO:0015935">
    <property type="term" value="C:small ribosomal subunit"/>
    <property type="evidence" value="ECO:0007669"/>
    <property type="project" value="TreeGrafter"/>
</dbReference>
<dbReference type="GO" id="GO:0019843">
    <property type="term" value="F:rRNA binding"/>
    <property type="evidence" value="ECO:0007669"/>
    <property type="project" value="UniProtKB-UniRule"/>
</dbReference>
<dbReference type="GO" id="GO:0003735">
    <property type="term" value="F:structural constituent of ribosome"/>
    <property type="evidence" value="ECO:0007669"/>
    <property type="project" value="InterPro"/>
</dbReference>
<dbReference type="GO" id="GO:0008270">
    <property type="term" value="F:zinc ion binding"/>
    <property type="evidence" value="ECO:0007669"/>
    <property type="project" value="UniProtKB-UniRule"/>
</dbReference>
<dbReference type="GO" id="GO:0006412">
    <property type="term" value="P:translation"/>
    <property type="evidence" value="ECO:0007669"/>
    <property type="project" value="UniProtKB-UniRule"/>
</dbReference>
<dbReference type="FunFam" id="4.10.830.10:FF:000001">
    <property type="entry name" value="30S ribosomal protein S14 type Z"/>
    <property type="match status" value="1"/>
</dbReference>
<dbReference type="Gene3D" id="4.10.830.10">
    <property type="entry name" value="30s Ribosomal Protein S14, Chain N"/>
    <property type="match status" value="1"/>
</dbReference>
<dbReference type="HAMAP" id="MF_01364_B">
    <property type="entry name" value="Ribosomal_uS14_2_B"/>
    <property type="match status" value="1"/>
</dbReference>
<dbReference type="InterPro" id="IPR001209">
    <property type="entry name" value="Ribosomal_uS14"/>
</dbReference>
<dbReference type="InterPro" id="IPR023053">
    <property type="entry name" value="Ribosomal_uS14_bact"/>
</dbReference>
<dbReference type="InterPro" id="IPR018271">
    <property type="entry name" value="Ribosomal_uS14_CS"/>
</dbReference>
<dbReference type="InterPro" id="IPR043140">
    <property type="entry name" value="Ribosomal_uS14_sf"/>
</dbReference>
<dbReference type="NCBIfam" id="NF005974">
    <property type="entry name" value="PRK08061.1"/>
    <property type="match status" value="1"/>
</dbReference>
<dbReference type="PANTHER" id="PTHR19836">
    <property type="entry name" value="30S RIBOSOMAL PROTEIN S14"/>
    <property type="match status" value="1"/>
</dbReference>
<dbReference type="PANTHER" id="PTHR19836:SF19">
    <property type="entry name" value="SMALL RIBOSOMAL SUBUNIT PROTEIN US14M"/>
    <property type="match status" value="1"/>
</dbReference>
<dbReference type="Pfam" id="PF00253">
    <property type="entry name" value="Ribosomal_S14"/>
    <property type="match status" value="1"/>
</dbReference>
<dbReference type="SUPFAM" id="SSF57716">
    <property type="entry name" value="Glucocorticoid receptor-like (DNA-binding domain)"/>
    <property type="match status" value="1"/>
</dbReference>
<dbReference type="PROSITE" id="PS00527">
    <property type="entry name" value="RIBOSOMAL_S14"/>
    <property type="match status" value="1"/>
</dbReference>